<dbReference type="EMBL" id="CP000494">
    <property type="protein sequence ID" value="ABQ33223.1"/>
    <property type="molecule type" value="Genomic_DNA"/>
</dbReference>
<dbReference type="RefSeq" id="WP_009029981.1">
    <property type="nucleotide sequence ID" value="NC_009485.1"/>
</dbReference>
<dbReference type="SMR" id="A5EAM9"/>
<dbReference type="STRING" id="288000.BBta_0967"/>
<dbReference type="KEGG" id="bbt:BBta_0967"/>
<dbReference type="eggNOG" id="COG0851">
    <property type="taxonomic scope" value="Bacteria"/>
</dbReference>
<dbReference type="HOGENOM" id="CLU_137929_2_0_5"/>
<dbReference type="OrthoDB" id="9802655at2"/>
<dbReference type="Proteomes" id="UP000000246">
    <property type="component" value="Chromosome"/>
</dbReference>
<dbReference type="GO" id="GO:0051301">
    <property type="term" value="P:cell division"/>
    <property type="evidence" value="ECO:0007669"/>
    <property type="project" value="UniProtKB-KW"/>
</dbReference>
<dbReference type="GO" id="GO:0032955">
    <property type="term" value="P:regulation of division septum assembly"/>
    <property type="evidence" value="ECO:0007669"/>
    <property type="project" value="InterPro"/>
</dbReference>
<dbReference type="Gene3D" id="3.30.1070.10">
    <property type="entry name" value="Cell division topological specificity factor MinE"/>
    <property type="match status" value="1"/>
</dbReference>
<dbReference type="HAMAP" id="MF_00262">
    <property type="entry name" value="MinE"/>
    <property type="match status" value="1"/>
</dbReference>
<dbReference type="InterPro" id="IPR005527">
    <property type="entry name" value="MinE"/>
</dbReference>
<dbReference type="InterPro" id="IPR036707">
    <property type="entry name" value="MinE_sf"/>
</dbReference>
<dbReference type="NCBIfam" id="TIGR01215">
    <property type="entry name" value="minE"/>
    <property type="match status" value="1"/>
</dbReference>
<dbReference type="NCBIfam" id="NF001422">
    <property type="entry name" value="PRK00296.1"/>
    <property type="match status" value="1"/>
</dbReference>
<dbReference type="Pfam" id="PF03776">
    <property type="entry name" value="MinE"/>
    <property type="match status" value="1"/>
</dbReference>
<dbReference type="SUPFAM" id="SSF55229">
    <property type="entry name" value="Cell division protein MinE topological specificity domain"/>
    <property type="match status" value="1"/>
</dbReference>
<organism>
    <name type="scientific">Bradyrhizobium sp. (strain BTAi1 / ATCC BAA-1182)</name>
    <dbReference type="NCBI Taxonomy" id="288000"/>
    <lineage>
        <taxon>Bacteria</taxon>
        <taxon>Pseudomonadati</taxon>
        <taxon>Pseudomonadota</taxon>
        <taxon>Alphaproteobacteria</taxon>
        <taxon>Hyphomicrobiales</taxon>
        <taxon>Nitrobacteraceae</taxon>
        <taxon>Bradyrhizobium</taxon>
    </lineage>
</organism>
<sequence length="91" mass="10094">MSVLRLFTGRAASAPVARERLQILLAHERSLRGQPDLLMQLREEILAVVSRHVLLDPDKVIVRMDRGKHVSTLEVDIELPNGADRAFASAG</sequence>
<keyword id="KW-0131">Cell cycle</keyword>
<keyword id="KW-0132">Cell division</keyword>
<keyword id="KW-1185">Reference proteome</keyword>
<accession>A5EAM9</accession>
<proteinExistence type="inferred from homology"/>
<protein>
    <recommendedName>
        <fullName evidence="1">Cell division topological specificity factor</fullName>
    </recommendedName>
</protein>
<reference key="1">
    <citation type="journal article" date="2007" name="Science">
        <title>Legumes symbioses: absence of nod genes in photosynthetic bradyrhizobia.</title>
        <authorList>
            <person name="Giraud E."/>
            <person name="Moulin L."/>
            <person name="Vallenet D."/>
            <person name="Barbe V."/>
            <person name="Cytryn E."/>
            <person name="Avarre J.-C."/>
            <person name="Jaubert M."/>
            <person name="Simon D."/>
            <person name="Cartieaux F."/>
            <person name="Prin Y."/>
            <person name="Bena G."/>
            <person name="Hannibal L."/>
            <person name="Fardoux J."/>
            <person name="Kojadinovic M."/>
            <person name="Vuillet L."/>
            <person name="Lajus A."/>
            <person name="Cruveiller S."/>
            <person name="Rouy Z."/>
            <person name="Mangenot S."/>
            <person name="Segurens B."/>
            <person name="Dossat C."/>
            <person name="Franck W.L."/>
            <person name="Chang W.-S."/>
            <person name="Saunders E."/>
            <person name="Bruce D."/>
            <person name="Richardson P."/>
            <person name="Normand P."/>
            <person name="Dreyfus B."/>
            <person name="Pignol D."/>
            <person name="Stacey G."/>
            <person name="Emerich D."/>
            <person name="Vermeglio A."/>
            <person name="Medigue C."/>
            <person name="Sadowsky M."/>
        </authorList>
    </citation>
    <scope>NUCLEOTIDE SEQUENCE [LARGE SCALE GENOMIC DNA]</scope>
    <source>
        <strain>BTAi1 / ATCC BAA-1182</strain>
    </source>
</reference>
<evidence type="ECO:0000255" key="1">
    <source>
        <dbReference type="HAMAP-Rule" id="MF_00262"/>
    </source>
</evidence>
<name>MINE_BRASB</name>
<gene>
    <name evidence="1" type="primary">minE</name>
    <name type="ordered locus">BBta_0967</name>
</gene>
<comment type="function">
    <text evidence="1">Prevents the cell division inhibition by proteins MinC and MinD at internal division sites while permitting inhibition at polar sites. This ensures cell division at the proper site by restricting the formation of a division septum at the midpoint of the long axis of the cell.</text>
</comment>
<comment type="similarity">
    <text evidence="1">Belongs to the MinE family.</text>
</comment>
<feature type="chain" id="PRO_0000298081" description="Cell division topological specificity factor">
    <location>
        <begin position="1"/>
        <end position="91"/>
    </location>
</feature>